<reference key="1">
    <citation type="journal article" date="2006" name="Nat. Biotechnol.">
        <title>The genome and transcriptomes of the anti-tumor agent Clostridium novyi-NT.</title>
        <authorList>
            <person name="Bettegowda C."/>
            <person name="Huang X."/>
            <person name="Lin J."/>
            <person name="Cheong I."/>
            <person name="Kohli M."/>
            <person name="Szabo S.A."/>
            <person name="Zhang X."/>
            <person name="Diaz L.A. Jr."/>
            <person name="Velculescu V.E."/>
            <person name="Parmigiani G."/>
            <person name="Kinzler K.W."/>
            <person name="Vogelstein B."/>
            <person name="Zhou S."/>
        </authorList>
    </citation>
    <scope>NUCLEOTIDE SEQUENCE [LARGE SCALE GENOMIC DNA]</scope>
    <source>
        <strain>NT</strain>
    </source>
</reference>
<name>ANSME_CLONN</name>
<feature type="chain" id="PRO_0000333037" description="Cysteine-type anaerobic sulfatase-maturating enzyme">
    <location>
        <begin position="1"/>
        <end position="374"/>
    </location>
</feature>
<feature type="domain" description="Radical SAM core" evidence="2">
    <location>
        <begin position="1"/>
        <end position="227"/>
    </location>
</feature>
<feature type="active site" description="Proton acceptor" evidence="1">
    <location>
        <position position="277"/>
    </location>
</feature>
<feature type="binding site" evidence="1">
    <location>
        <position position="15"/>
    </location>
    <ligand>
        <name>[4Fe-4S] cluster</name>
        <dbReference type="ChEBI" id="CHEBI:49883"/>
        <label>1</label>
        <note>4Fe-4S-S-AdoMet</note>
    </ligand>
</feature>
<feature type="binding site" evidence="1">
    <location>
        <position position="19"/>
    </location>
    <ligand>
        <name>[4Fe-4S] cluster</name>
        <dbReference type="ChEBI" id="CHEBI:49883"/>
        <label>1</label>
        <note>4Fe-4S-S-AdoMet</note>
    </ligand>
</feature>
<feature type="binding site" evidence="1">
    <location>
        <position position="21"/>
    </location>
    <ligand>
        <name>S-adenosyl-L-methionine</name>
        <dbReference type="ChEBI" id="CHEBI:59789"/>
    </ligand>
</feature>
<feature type="binding site" evidence="1">
    <location>
        <position position="22"/>
    </location>
    <ligand>
        <name>[4Fe-4S] cluster</name>
        <dbReference type="ChEBI" id="CHEBI:49883"/>
        <label>1</label>
        <note>4Fe-4S-S-AdoMet</note>
    </ligand>
</feature>
<feature type="binding site" evidence="1">
    <location>
        <position position="66"/>
    </location>
    <ligand>
        <name>S-adenosyl-L-methionine</name>
        <dbReference type="ChEBI" id="CHEBI:59789"/>
    </ligand>
</feature>
<feature type="binding site" evidence="1">
    <location>
        <position position="122"/>
    </location>
    <ligand>
        <name>S-adenosyl-L-methionine</name>
        <dbReference type="ChEBI" id="CHEBI:59789"/>
    </ligand>
</feature>
<feature type="binding site" evidence="1">
    <location>
        <position position="134"/>
    </location>
    <ligand>
        <name>S-adenosyl-L-methionine</name>
        <dbReference type="ChEBI" id="CHEBI:59789"/>
    </ligand>
</feature>
<feature type="binding site" evidence="1">
    <location>
        <position position="195"/>
    </location>
    <ligand>
        <name>S-adenosyl-L-methionine</name>
        <dbReference type="ChEBI" id="CHEBI:59789"/>
    </ligand>
</feature>
<feature type="binding site" evidence="1">
    <location>
        <position position="255"/>
    </location>
    <ligand>
        <name>[4Fe-4S] cluster</name>
        <dbReference type="ChEBI" id="CHEBI:49883"/>
        <label>2</label>
    </ligand>
</feature>
<feature type="binding site" evidence="1">
    <location>
        <position position="261"/>
    </location>
    <ligand>
        <name>[4Fe-4S] cluster</name>
        <dbReference type="ChEBI" id="CHEBI:49883"/>
        <label>2</label>
    </ligand>
</feature>
<feature type="binding site" evidence="1">
    <location>
        <position position="276"/>
    </location>
    <ligand>
        <name>[4Fe-4S] cluster</name>
        <dbReference type="ChEBI" id="CHEBI:49883"/>
        <label>2</label>
    </ligand>
</feature>
<feature type="binding site" evidence="1">
    <location>
        <position position="317"/>
    </location>
    <ligand>
        <name>[4Fe-4S] cluster</name>
        <dbReference type="ChEBI" id="CHEBI:49883"/>
        <label>3</label>
    </ligand>
</feature>
<feature type="binding site" evidence="1">
    <location>
        <position position="320"/>
    </location>
    <ligand>
        <name>[4Fe-4S] cluster</name>
        <dbReference type="ChEBI" id="CHEBI:49883"/>
        <label>3</label>
    </ligand>
</feature>
<feature type="binding site" evidence="1">
    <location>
        <position position="326"/>
    </location>
    <ligand>
        <name>[4Fe-4S] cluster</name>
        <dbReference type="ChEBI" id="CHEBI:49883"/>
        <label>3</label>
    </ligand>
</feature>
<feature type="binding site" evidence="1">
    <location>
        <position position="330"/>
    </location>
    <ligand>
        <name>[4Fe-4S] cluster</name>
        <dbReference type="ChEBI" id="CHEBI:49883"/>
        <label>2</label>
    </ligand>
</feature>
<feature type="binding site" evidence="1">
    <location>
        <position position="348"/>
    </location>
    <ligand>
        <name>[4Fe-4S] cluster</name>
        <dbReference type="ChEBI" id="CHEBI:49883"/>
        <label>3</label>
    </ligand>
</feature>
<evidence type="ECO:0000250" key="1">
    <source>
        <dbReference type="UniProtKB" id="Q0TTH1"/>
    </source>
</evidence>
<evidence type="ECO:0000255" key="2">
    <source>
        <dbReference type="PROSITE-ProRule" id="PRU01266"/>
    </source>
</evidence>
<evidence type="ECO:0000305" key="3"/>
<organism>
    <name type="scientific">Clostridium novyi (strain NT)</name>
    <dbReference type="NCBI Taxonomy" id="386415"/>
    <lineage>
        <taxon>Bacteria</taxon>
        <taxon>Bacillati</taxon>
        <taxon>Bacillota</taxon>
        <taxon>Clostridia</taxon>
        <taxon>Eubacteriales</taxon>
        <taxon>Clostridiaceae</taxon>
        <taxon>Clostridium</taxon>
    </lineage>
</organism>
<dbReference type="EC" id="1.8.98.7" evidence="1"/>
<dbReference type="EMBL" id="CP000382">
    <property type="protein sequence ID" value="ABK62380.1"/>
    <property type="molecule type" value="Genomic_DNA"/>
</dbReference>
<dbReference type="RefSeq" id="WP_011722778.1">
    <property type="nucleotide sequence ID" value="NC_008593.1"/>
</dbReference>
<dbReference type="SMR" id="A0Q2E1"/>
<dbReference type="STRING" id="386415.NT01CX_0295"/>
<dbReference type="KEGG" id="cno:NT01CX_0295"/>
<dbReference type="eggNOG" id="COG0641">
    <property type="taxonomic scope" value="Bacteria"/>
</dbReference>
<dbReference type="HOGENOM" id="CLU_009273_10_0_9"/>
<dbReference type="UniPathway" id="UPA00910"/>
<dbReference type="Proteomes" id="UP000008220">
    <property type="component" value="Chromosome"/>
</dbReference>
<dbReference type="GO" id="GO:0051539">
    <property type="term" value="F:4 iron, 4 sulfur cluster binding"/>
    <property type="evidence" value="ECO:0007669"/>
    <property type="project" value="UniProtKB-KW"/>
</dbReference>
<dbReference type="GO" id="GO:0046872">
    <property type="term" value="F:metal ion binding"/>
    <property type="evidence" value="ECO:0007669"/>
    <property type="project" value="UniProtKB-KW"/>
</dbReference>
<dbReference type="GO" id="GO:0016491">
    <property type="term" value="F:oxidoreductase activity"/>
    <property type="evidence" value="ECO:0007669"/>
    <property type="project" value="UniProtKB-KW"/>
</dbReference>
<dbReference type="CDD" id="cd01335">
    <property type="entry name" value="Radical_SAM"/>
    <property type="match status" value="1"/>
</dbReference>
<dbReference type="CDD" id="cd21120">
    <property type="entry name" value="SPASM_anSME"/>
    <property type="match status" value="1"/>
</dbReference>
<dbReference type="Gene3D" id="3.20.20.70">
    <property type="entry name" value="Aldolase class I"/>
    <property type="match status" value="1"/>
</dbReference>
<dbReference type="InterPro" id="IPR023885">
    <property type="entry name" value="4Fe4S-binding_SPASM_dom"/>
</dbReference>
<dbReference type="InterPro" id="IPR013785">
    <property type="entry name" value="Aldolase_TIM"/>
</dbReference>
<dbReference type="InterPro" id="IPR034485">
    <property type="entry name" value="Anaerobic_Cys-type_sulfatase-m"/>
</dbReference>
<dbReference type="InterPro" id="IPR007197">
    <property type="entry name" value="rSAM"/>
</dbReference>
<dbReference type="InterPro" id="IPR047207">
    <property type="entry name" value="SPASM_anSME"/>
</dbReference>
<dbReference type="InterPro" id="IPR023867">
    <property type="entry name" value="Sulphatase_maturase_rSAM"/>
</dbReference>
<dbReference type="NCBIfam" id="NF010321">
    <property type="entry name" value="PRK13758.1"/>
    <property type="match status" value="1"/>
</dbReference>
<dbReference type="NCBIfam" id="TIGR04085">
    <property type="entry name" value="rSAM_more_4Fe4S"/>
    <property type="match status" value="1"/>
</dbReference>
<dbReference type="NCBIfam" id="TIGR03942">
    <property type="entry name" value="sulfatase_rSAM"/>
    <property type="match status" value="1"/>
</dbReference>
<dbReference type="PANTHER" id="PTHR43273">
    <property type="entry name" value="ANAEROBIC SULFATASE-MATURATING ENZYME HOMOLOG ASLB-RELATED"/>
    <property type="match status" value="1"/>
</dbReference>
<dbReference type="PANTHER" id="PTHR43273:SF3">
    <property type="entry name" value="ANAEROBIC SULFATASE-MATURATING ENZYME HOMOLOG ASLB-RELATED"/>
    <property type="match status" value="1"/>
</dbReference>
<dbReference type="Pfam" id="PF13353">
    <property type="entry name" value="Fer4_12"/>
    <property type="match status" value="1"/>
</dbReference>
<dbReference type="Pfam" id="PF04055">
    <property type="entry name" value="Radical_SAM"/>
    <property type="match status" value="1"/>
</dbReference>
<dbReference type="Pfam" id="PF13186">
    <property type="entry name" value="SPASM"/>
    <property type="match status" value="1"/>
</dbReference>
<dbReference type="SFLD" id="SFLDF00289">
    <property type="entry name" value="anaerobic_Cys-type_sulfatase-m"/>
    <property type="match status" value="1"/>
</dbReference>
<dbReference type="SFLD" id="SFLDG01067">
    <property type="entry name" value="SPASM/twitch_domain_containing"/>
    <property type="match status" value="1"/>
</dbReference>
<dbReference type="SFLD" id="SFLDG01384">
    <property type="entry name" value="thioether_bond_formation_requi"/>
    <property type="match status" value="1"/>
</dbReference>
<dbReference type="SUPFAM" id="SSF102114">
    <property type="entry name" value="Radical SAM enzymes"/>
    <property type="match status" value="1"/>
</dbReference>
<dbReference type="PROSITE" id="PS51918">
    <property type="entry name" value="RADICAL_SAM"/>
    <property type="match status" value="1"/>
</dbReference>
<protein>
    <recommendedName>
        <fullName evidence="1">Cysteine-type anaerobic sulfatase-maturating enzyme</fullName>
        <shortName evidence="1">Cys-type anaerobic sulfatase-maturating enzyme</shortName>
        <ecNumber evidence="1">1.8.98.7</ecNumber>
    </recommendedName>
    <alternativeName>
        <fullName evidence="1">Anaerobic sulfatase-maturating enzyme</fullName>
        <shortName evidence="1">AnSME</shortName>
    </alternativeName>
</protein>
<comment type="function">
    <text evidence="1">Involved in 'Cys-type' sulfatase maturation under anaerobic conditions. Catalyzes the post-translational modification of cysteine into 3-oxoalanine (also known as C(alpha)-formylglycine (FGly)), by a free radical chemical mechanism initiated via the reductive cleavage of S-adenosyl-L-methionine (SAM).</text>
</comment>
<comment type="catalytic activity">
    <reaction evidence="1">
        <text>L-cysteinyl-[sulfatase] + S-adenosyl-L-methionine + H2O = 3-oxo-L-alanyl-[sulfatase] + hydrogen sulfide + 5'-deoxyadenosine + L-methionine + 2 H(+)</text>
        <dbReference type="Rhea" id="RHEA:61592"/>
        <dbReference type="Rhea" id="RHEA-COMP:12900"/>
        <dbReference type="Rhea" id="RHEA-COMP:12901"/>
        <dbReference type="ChEBI" id="CHEBI:15377"/>
        <dbReference type="ChEBI" id="CHEBI:15378"/>
        <dbReference type="ChEBI" id="CHEBI:17319"/>
        <dbReference type="ChEBI" id="CHEBI:29919"/>
        <dbReference type="ChEBI" id="CHEBI:29950"/>
        <dbReference type="ChEBI" id="CHEBI:57844"/>
        <dbReference type="ChEBI" id="CHEBI:59789"/>
        <dbReference type="ChEBI" id="CHEBI:85621"/>
        <dbReference type="EC" id="1.8.98.7"/>
    </reaction>
</comment>
<comment type="cofactor">
    <cofactor evidence="1">
        <name>[4Fe-4S] cluster</name>
        <dbReference type="ChEBI" id="CHEBI:49883"/>
    </cofactor>
    <text evidence="1">Binds 3 [4Fe-4S] clusters (By similarity). The first cluster is coordinated with 3 cysteines and an exchangeable S-adenosyl-L-methionine (By similarity).</text>
</comment>
<comment type="pathway">
    <text evidence="1">Protein modification; sulfatase oxidation.</text>
</comment>
<comment type="similarity">
    <text evidence="3">Belongs to the radical SAM superfamily. Anaerobic sulfatase-maturating enzyme family.</text>
</comment>
<accession>A0Q2E1</accession>
<gene>
    <name type="ordered locus">NT01CX_0295</name>
</gene>
<sequence length="374" mass="44086">MKSLSMLIKPASSNCNLRCTYCFYYDICNNREIKSFGMMKLNLLETIVKRAFNEAEQNCTFAFQGGEPTLVGIDFYREFINFVKKYNTRNINVFYSIQTNGTTINEDWAKFFKENNFLVGISLDGTKEIHDKYRLDANKKGSFNKIMTNIKILNRYKVEYNILTVVNKNTSRHIDKIYKFFKKQDFRFLQFIPCLDPINDPRESHPYSLNPKDYETFLNKLFDLWFKDFLDGRFVSIRYFDDLLSILLGNNPKSCCMNGFCSCEFVIESDGSVYPCDFYVLDEYKIGYIEEKTFSELFNSNVTKNFIDSSLNHDVKCKNCNWYPLCRSGCRRNKEPNFPNGTNDNIFCESFKSFFEKNISKLTYVAKTLAYRQH</sequence>
<proteinExistence type="inferred from homology"/>
<keyword id="KW-0004">4Fe-4S</keyword>
<keyword id="KW-0408">Iron</keyword>
<keyword id="KW-0411">Iron-sulfur</keyword>
<keyword id="KW-0479">Metal-binding</keyword>
<keyword id="KW-0560">Oxidoreductase</keyword>
<keyword id="KW-1185">Reference proteome</keyword>
<keyword id="KW-0949">S-adenosyl-L-methionine</keyword>